<comment type="function">
    <text evidence="4">Part of the ABC transporter complex YclNOPQ involved in uptake of ferric-petrobactin. Petrobactin is a photoreactive 3,4-catecholate siderophore produced by many members of the B.cereus group, including B.anthracis. Binds selectively iron-free and ferric petrobactin and the petrobactin precursor 3,4-dihydroxybenzoic acid (3,4-DHB).</text>
</comment>
<comment type="subunit">
    <text evidence="5 7">The complex is composed of two ATP-binding proteins (YclP), two transmembrane proteins (YclN and YclO) and a solute-binding protein (YclQ) (Probable). Interacts with FloT (PubMed:23651456).</text>
</comment>
<comment type="subcellular location">
    <subcellularLocation>
        <location evidence="1 5">Cell membrane</location>
        <topology evidence="1">Lipid-anchor</topology>
    </subcellularLocation>
    <subcellularLocation>
        <location evidence="5">Membrane raft</location>
        <topology>Lipid-anchor</topology>
    </subcellularLocation>
    <text evidence="3 5 7">Also found in the extracellular protein fraction (PubMed:10658653). May exist in both membrane-tethered and soluble form (Probable). Present in detergent-resistant membrane (DRM) fractions that may be equivalent to eukaryotic membrane rafts; these rafts include proteins involved in signaling, molecule trafficking and protein secretion (PubMed:23651456).</text>
</comment>
<comment type="disruption phenotype">
    <text evidence="4">Disruption mutants are unable to use petrobactin for iron delivery and growth.</text>
</comment>
<comment type="similarity">
    <text evidence="6">Belongs to the bacterial solute-binding protein 8 family.</text>
</comment>
<protein>
    <recommendedName>
        <fullName evidence="6">Petrobactin-binding protein YclQ</fullName>
    </recommendedName>
</protein>
<evidence type="ECO:0000255" key="1">
    <source>
        <dbReference type="PROSITE-ProRule" id="PRU00303"/>
    </source>
</evidence>
<evidence type="ECO:0000255" key="2">
    <source>
        <dbReference type="PROSITE-ProRule" id="PRU00344"/>
    </source>
</evidence>
<evidence type="ECO:0000269" key="3">
    <source>
    </source>
</evidence>
<evidence type="ECO:0000269" key="4">
    <source>
    </source>
</evidence>
<evidence type="ECO:0000269" key="5">
    <source>
    </source>
</evidence>
<evidence type="ECO:0000305" key="6"/>
<evidence type="ECO:0000305" key="7">
    <source>
    </source>
</evidence>
<evidence type="ECO:0007744" key="8">
    <source>
        <dbReference type="PDB" id="3GFV"/>
    </source>
</evidence>
<evidence type="ECO:0007829" key="9">
    <source>
        <dbReference type="PDB" id="3GFV"/>
    </source>
</evidence>
<name>YCLQ_BACSU</name>
<gene>
    <name type="primary">yclQ</name>
    <name type="ordered locus">BSU03830</name>
</gene>
<sequence length="317" mass="34792">MKKFALLFIALVTAVVISACGNQSTSSKGSDTKKEQITVKHQLDKNGTKVPKNPKKVVVFDFGSLDTLDKLGLDDIVAGLPKQVLPKYLSKFKDDKYADVGSLKEPDFDKVAELDPDLIIISARQSESYKEFSKIAPTIYLGVDTAKYMESFKSDAETIGKIFDKEDKVKDELANIDHSIADVKKTAEKLNKNGLVIMANDGKISAFGPKSRYGLIHDVFGVAPADQNIKASTHGQSVSYEYISKTNPDYLFVIDRGTAIGETSSTKQVVENDYVKNVNAVKNGHVIYLDSATWYLSGGGLESMTQMIKEVKDGLEK</sequence>
<organism>
    <name type="scientific">Bacillus subtilis (strain 168)</name>
    <dbReference type="NCBI Taxonomy" id="224308"/>
    <lineage>
        <taxon>Bacteria</taxon>
        <taxon>Bacillati</taxon>
        <taxon>Bacillota</taxon>
        <taxon>Bacilli</taxon>
        <taxon>Bacillales</taxon>
        <taxon>Bacillaceae</taxon>
        <taxon>Bacillus</taxon>
    </lineage>
</organism>
<reference key="1">
    <citation type="journal article" date="1996" name="Microbiology">
        <title>The 25 degrees-36 degrees region of the Bacillus subtilis chromosome: determination of the sequence of a 146 kb segment and identification of 113 genes.</title>
        <authorList>
            <person name="Yamane K."/>
            <person name="Kumano M."/>
            <person name="Kurita K."/>
        </authorList>
    </citation>
    <scope>NUCLEOTIDE SEQUENCE [GENOMIC DNA]</scope>
    <source>
        <strain>168</strain>
    </source>
</reference>
<reference key="2">
    <citation type="journal article" date="1997" name="Nature">
        <title>The complete genome sequence of the Gram-positive bacterium Bacillus subtilis.</title>
        <authorList>
            <person name="Kunst F."/>
            <person name="Ogasawara N."/>
            <person name="Moszer I."/>
            <person name="Albertini A.M."/>
            <person name="Alloni G."/>
            <person name="Azevedo V."/>
            <person name="Bertero M.G."/>
            <person name="Bessieres P."/>
            <person name="Bolotin A."/>
            <person name="Borchert S."/>
            <person name="Borriss R."/>
            <person name="Boursier L."/>
            <person name="Brans A."/>
            <person name="Braun M."/>
            <person name="Brignell S.C."/>
            <person name="Bron S."/>
            <person name="Brouillet S."/>
            <person name="Bruschi C.V."/>
            <person name="Caldwell B."/>
            <person name="Capuano V."/>
            <person name="Carter N.M."/>
            <person name="Choi S.-K."/>
            <person name="Codani J.-J."/>
            <person name="Connerton I.F."/>
            <person name="Cummings N.J."/>
            <person name="Daniel R.A."/>
            <person name="Denizot F."/>
            <person name="Devine K.M."/>
            <person name="Duesterhoeft A."/>
            <person name="Ehrlich S.D."/>
            <person name="Emmerson P.T."/>
            <person name="Entian K.-D."/>
            <person name="Errington J."/>
            <person name="Fabret C."/>
            <person name="Ferrari E."/>
            <person name="Foulger D."/>
            <person name="Fritz C."/>
            <person name="Fujita M."/>
            <person name="Fujita Y."/>
            <person name="Fuma S."/>
            <person name="Galizzi A."/>
            <person name="Galleron N."/>
            <person name="Ghim S.-Y."/>
            <person name="Glaser P."/>
            <person name="Goffeau A."/>
            <person name="Golightly E.J."/>
            <person name="Grandi G."/>
            <person name="Guiseppi G."/>
            <person name="Guy B.J."/>
            <person name="Haga K."/>
            <person name="Haiech J."/>
            <person name="Harwood C.R."/>
            <person name="Henaut A."/>
            <person name="Hilbert H."/>
            <person name="Holsappel S."/>
            <person name="Hosono S."/>
            <person name="Hullo M.-F."/>
            <person name="Itaya M."/>
            <person name="Jones L.-M."/>
            <person name="Joris B."/>
            <person name="Karamata D."/>
            <person name="Kasahara Y."/>
            <person name="Klaerr-Blanchard M."/>
            <person name="Klein C."/>
            <person name="Kobayashi Y."/>
            <person name="Koetter P."/>
            <person name="Koningstein G."/>
            <person name="Krogh S."/>
            <person name="Kumano M."/>
            <person name="Kurita K."/>
            <person name="Lapidus A."/>
            <person name="Lardinois S."/>
            <person name="Lauber J."/>
            <person name="Lazarevic V."/>
            <person name="Lee S.-M."/>
            <person name="Levine A."/>
            <person name="Liu H."/>
            <person name="Masuda S."/>
            <person name="Mauel C."/>
            <person name="Medigue C."/>
            <person name="Medina N."/>
            <person name="Mellado R.P."/>
            <person name="Mizuno M."/>
            <person name="Moestl D."/>
            <person name="Nakai S."/>
            <person name="Noback M."/>
            <person name="Noone D."/>
            <person name="O'Reilly M."/>
            <person name="Ogawa K."/>
            <person name="Ogiwara A."/>
            <person name="Oudega B."/>
            <person name="Park S.-H."/>
            <person name="Parro V."/>
            <person name="Pohl T.M."/>
            <person name="Portetelle D."/>
            <person name="Porwollik S."/>
            <person name="Prescott A.M."/>
            <person name="Presecan E."/>
            <person name="Pujic P."/>
            <person name="Purnelle B."/>
            <person name="Rapoport G."/>
            <person name="Rey M."/>
            <person name="Reynolds S."/>
            <person name="Rieger M."/>
            <person name="Rivolta C."/>
            <person name="Rocha E."/>
            <person name="Roche B."/>
            <person name="Rose M."/>
            <person name="Sadaie Y."/>
            <person name="Sato T."/>
            <person name="Scanlan E."/>
            <person name="Schleich S."/>
            <person name="Schroeter R."/>
            <person name="Scoffone F."/>
            <person name="Sekiguchi J."/>
            <person name="Sekowska A."/>
            <person name="Seror S.J."/>
            <person name="Serror P."/>
            <person name="Shin B.-S."/>
            <person name="Soldo B."/>
            <person name="Sorokin A."/>
            <person name="Tacconi E."/>
            <person name="Takagi T."/>
            <person name="Takahashi H."/>
            <person name="Takemaru K."/>
            <person name="Takeuchi M."/>
            <person name="Tamakoshi A."/>
            <person name="Tanaka T."/>
            <person name="Terpstra P."/>
            <person name="Tognoni A."/>
            <person name="Tosato V."/>
            <person name="Uchiyama S."/>
            <person name="Vandenbol M."/>
            <person name="Vannier F."/>
            <person name="Vassarotti A."/>
            <person name="Viari A."/>
            <person name="Wambutt R."/>
            <person name="Wedler E."/>
            <person name="Wedler H."/>
            <person name="Weitzenegger T."/>
            <person name="Winters P."/>
            <person name="Wipat A."/>
            <person name="Yamamoto H."/>
            <person name="Yamane K."/>
            <person name="Yasumoto K."/>
            <person name="Yata K."/>
            <person name="Yoshida K."/>
            <person name="Yoshikawa H.-F."/>
            <person name="Zumstein E."/>
            <person name="Yoshikawa H."/>
            <person name="Danchin A."/>
        </authorList>
    </citation>
    <scope>NUCLEOTIDE SEQUENCE [LARGE SCALE GENOMIC DNA]</scope>
    <source>
        <strain>168</strain>
    </source>
</reference>
<reference key="3">
    <citation type="journal article" date="2000" name="Microbiology">
        <title>Proteome analysis of Bacillus subtilis extracellular proteins: a two-dimensional protein electrophoretic study.</title>
        <authorList>
            <person name="Hirose I."/>
            <person name="Sano K."/>
            <person name="Shioda I."/>
            <person name="Kumano M."/>
            <person name="Nakamura K."/>
            <person name="Yamane K."/>
        </authorList>
    </citation>
    <scope>PROTEIN SEQUENCE OF 30-40</scope>
    <scope>SUBCELLULAR LOCATION</scope>
    <source>
        <strain>168</strain>
    </source>
</reference>
<reference key="4">
    <citation type="journal article" date="2013" name="Mol. Microbiol.">
        <title>Flotillins functionally organize the bacterial membrane.</title>
        <authorList>
            <person name="Bach J.N."/>
            <person name="Bramkamp M."/>
        </authorList>
    </citation>
    <scope>INTERACTION WITH FLOT</scope>
    <scope>SUBCELLULAR LOCATION</scope>
    <source>
        <strain>168</strain>
    </source>
</reference>
<reference evidence="8" key="5">
    <citation type="journal article" date="2009" name="Proc. Natl. Acad. Sci. U.S.A.">
        <title>Characterization of a Bacillus subtilis transporter for petrobactin, an anthrax stealth siderophore.</title>
        <authorList>
            <person name="Zawadzka A.M."/>
            <person name="Kim Y."/>
            <person name="Maltseva N."/>
            <person name="Nichiporuk R."/>
            <person name="Fan Y."/>
            <person name="Joachimiak A."/>
            <person name="Raymond K.N."/>
        </authorList>
    </citation>
    <scope>X-RAY CRYSTALLOGRAPHY (1.75 ANGSTROMS) OF 21-317</scope>
    <scope>FUNCTION</scope>
    <scope>SUBUNIT</scope>
    <scope>SUBCELLULAR LOCATION</scope>
    <scope>DISRUPTION PHENOTYPE</scope>
    <source>
        <strain>168</strain>
    </source>
</reference>
<dbReference type="EMBL" id="D50453">
    <property type="protein sequence ID" value="BAA09015.1"/>
    <property type="molecule type" value="Genomic_DNA"/>
</dbReference>
<dbReference type="EMBL" id="AL009126">
    <property type="protein sequence ID" value="CAB12191.1"/>
    <property type="molecule type" value="Genomic_DNA"/>
</dbReference>
<dbReference type="PIR" id="E69763">
    <property type="entry name" value="E69763"/>
</dbReference>
<dbReference type="RefSeq" id="WP_003246619.1">
    <property type="nucleotide sequence ID" value="NZ_OZ025638.1"/>
</dbReference>
<dbReference type="PDB" id="3GFV">
    <property type="method" value="X-ray"/>
    <property type="resolution" value="1.75 A"/>
    <property type="chains" value="A/B=21-317"/>
</dbReference>
<dbReference type="PDBsum" id="3GFV"/>
<dbReference type="SMR" id="P94421"/>
<dbReference type="FunCoup" id="P94421">
    <property type="interactions" value="31"/>
</dbReference>
<dbReference type="STRING" id="224308.BSU03830"/>
<dbReference type="PaxDb" id="224308-BSU03830"/>
<dbReference type="DNASU" id="938277"/>
<dbReference type="EnsemblBacteria" id="CAB12191">
    <property type="protein sequence ID" value="CAB12191"/>
    <property type="gene ID" value="BSU_03830"/>
</dbReference>
<dbReference type="GeneID" id="938277"/>
<dbReference type="KEGG" id="bsu:BSU03830"/>
<dbReference type="PATRIC" id="fig|224308.179.peg.406"/>
<dbReference type="eggNOG" id="COG4607">
    <property type="taxonomic scope" value="Bacteria"/>
</dbReference>
<dbReference type="InParanoid" id="P94421"/>
<dbReference type="OrthoDB" id="63946at2"/>
<dbReference type="PhylomeDB" id="P94421"/>
<dbReference type="BioCyc" id="BSUB:BSU03830-MONOMER"/>
<dbReference type="EvolutionaryTrace" id="P94421"/>
<dbReference type="Proteomes" id="UP000001570">
    <property type="component" value="Chromosome"/>
</dbReference>
<dbReference type="GO" id="GO:0045121">
    <property type="term" value="C:membrane raft"/>
    <property type="evidence" value="ECO:0007669"/>
    <property type="project" value="UniProtKB-SubCell"/>
</dbReference>
<dbReference type="GO" id="GO:0030288">
    <property type="term" value="C:outer membrane-bounded periplasmic space"/>
    <property type="evidence" value="ECO:0000318"/>
    <property type="project" value="GO_Central"/>
</dbReference>
<dbReference type="GO" id="GO:0005886">
    <property type="term" value="C:plasma membrane"/>
    <property type="evidence" value="ECO:0007669"/>
    <property type="project" value="UniProtKB-SubCell"/>
</dbReference>
<dbReference type="GO" id="GO:1901678">
    <property type="term" value="P:iron coordination entity transport"/>
    <property type="evidence" value="ECO:0007669"/>
    <property type="project" value="UniProtKB-ARBA"/>
</dbReference>
<dbReference type="CDD" id="cd01140">
    <property type="entry name" value="FatB"/>
    <property type="match status" value="1"/>
</dbReference>
<dbReference type="FunFam" id="3.40.50.1980:FF:000030">
    <property type="entry name" value="ABC transporter substrate-binding protein"/>
    <property type="match status" value="1"/>
</dbReference>
<dbReference type="FunFam" id="3.40.50.1980:FF:000012">
    <property type="entry name" value="Iron ABC transporter substrate-binding protein"/>
    <property type="match status" value="1"/>
</dbReference>
<dbReference type="Gene3D" id="3.40.50.1980">
    <property type="entry name" value="Nitrogenase molybdenum iron protein domain"/>
    <property type="match status" value="2"/>
</dbReference>
<dbReference type="InterPro" id="IPR002491">
    <property type="entry name" value="ABC_transptr_periplasmic_BD"/>
</dbReference>
<dbReference type="InterPro" id="IPR051313">
    <property type="entry name" value="Bact_iron-sidero_bind"/>
</dbReference>
<dbReference type="InterPro" id="IPR033870">
    <property type="entry name" value="FatB"/>
</dbReference>
<dbReference type="PANTHER" id="PTHR30532">
    <property type="entry name" value="IRON III DICITRATE-BINDING PERIPLASMIC PROTEIN"/>
    <property type="match status" value="1"/>
</dbReference>
<dbReference type="PANTHER" id="PTHR30532:SF28">
    <property type="entry name" value="PETROBACTIN-BINDING PROTEIN YCLQ"/>
    <property type="match status" value="1"/>
</dbReference>
<dbReference type="Pfam" id="PF01497">
    <property type="entry name" value="Peripla_BP_2"/>
    <property type="match status" value="1"/>
</dbReference>
<dbReference type="SUPFAM" id="SSF53807">
    <property type="entry name" value="Helical backbone' metal receptor"/>
    <property type="match status" value="1"/>
</dbReference>
<dbReference type="PROSITE" id="PS50983">
    <property type="entry name" value="FE_B12_PBP"/>
    <property type="match status" value="1"/>
</dbReference>
<dbReference type="PROSITE" id="PS51257">
    <property type="entry name" value="PROKAR_LIPOPROTEIN"/>
    <property type="match status" value="1"/>
</dbReference>
<keyword id="KW-0002">3D-structure</keyword>
<keyword id="KW-1003">Cell membrane</keyword>
<keyword id="KW-0903">Direct protein sequencing</keyword>
<keyword id="KW-0406">Ion transport</keyword>
<keyword id="KW-0408">Iron</keyword>
<keyword id="KW-0410">Iron transport</keyword>
<keyword id="KW-0449">Lipoprotein</keyword>
<keyword id="KW-0472">Membrane</keyword>
<keyword id="KW-0564">Palmitate</keyword>
<keyword id="KW-1185">Reference proteome</keyword>
<keyword id="KW-0732">Signal</keyword>
<keyword id="KW-0813">Transport</keyword>
<accession>P94421</accession>
<accession>Q797N9</accession>
<feature type="signal peptide" evidence="1">
    <location>
        <begin position="1"/>
        <end position="19"/>
    </location>
</feature>
<feature type="chain" id="PRO_0000359513" description="Petrobactin-binding protein YclQ" evidence="1">
    <location>
        <begin position="20"/>
        <end position="317"/>
    </location>
</feature>
<feature type="domain" description="Fe/B12 periplasmic-binding" evidence="2">
    <location>
        <begin position="56"/>
        <end position="317"/>
    </location>
</feature>
<feature type="lipid moiety-binding region" description="N-palmitoyl cysteine" evidence="1">
    <location>
        <position position="20"/>
    </location>
</feature>
<feature type="lipid moiety-binding region" description="S-diacylglycerol cysteine" evidence="1">
    <location>
        <position position="20"/>
    </location>
</feature>
<feature type="strand" evidence="9">
    <location>
        <begin position="36"/>
        <end position="41"/>
    </location>
</feature>
<feature type="strand" evidence="9">
    <location>
        <begin position="44"/>
        <end position="53"/>
    </location>
</feature>
<feature type="strand" evidence="9">
    <location>
        <begin position="57"/>
        <end position="59"/>
    </location>
</feature>
<feature type="helix" evidence="9">
    <location>
        <begin position="62"/>
        <end position="70"/>
    </location>
</feature>
<feature type="helix" evidence="9">
    <location>
        <begin position="74"/>
        <end position="76"/>
    </location>
</feature>
<feature type="strand" evidence="9">
    <location>
        <begin position="77"/>
        <end position="80"/>
    </location>
</feature>
<feature type="helix" evidence="9">
    <location>
        <begin position="87"/>
        <end position="93"/>
    </location>
</feature>
<feature type="strand" evidence="9">
    <location>
        <begin position="97"/>
        <end position="99"/>
    </location>
</feature>
<feature type="strand" evidence="9">
    <location>
        <begin position="103"/>
        <end position="106"/>
    </location>
</feature>
<feature type="helix" evidence="9">
    <location>
        <begin position="108"/>
        <end position="113"/>
    </location>
</feature>
<feature type="strand" evidence="9">
    <location>
        <begin position="117"/>
        <end position="121"/>
    </location>
</feature>
<feature type="helix" evidence="9">
    <location>
        <begin position="123"/>
        <end position="128"/>
    </location>
</feature>
<feature type="helix" evidence="9">
    <location>
        <begin position="129"/>
        <end position="135"/>
    </location>
</feature>
<feature type="strand" evidence="9">
    <location>
        <begin position="138"/>
        <end position="140"/>
    </location>
</feature>
<feature type="helix" evidence="9">
    <location>
        <begin position="145"/>
        <end position="147"/>
    </location>
</feature>
<feature type="helix" evidence="9">
    <location>
        <begin position="148"/>
        <end position="162"/>
    </location>
</feature>
<feature type="helix" evidence="9">
    <location>
        <begin position="166"/>
        <end position="190"/>
    </location>
</feature>
<feature type="strand" evidence="9">
    <location>
        <begin position="193"/>
        <end position="200"/>
    </location>
</feature>
<feature type="strand" evidence="9">
    <location>
        <begin position="203"/>
        <end position="207"/>
    </location>
</feature>
<feature type="turn" evidence="9">
    <location>
        <begin position="212"/>
        <end position="214"/>
    </location>
</feature>
<feature type="helix" evidence="9">
    <location>
        <begin position="215"/>
        <end position="218"/>
    </location>
</feature>
<feature type="strand" evidence="9">
    <location>
        <begin position="223"/>
        <end position="225"/>
    </location>
</feature>
<feature type="strand" evidence="9">
    <location>
        <begin position="236"/>
        <end position="238"/>
    </location>
</feature>
<feature type="helix" evidence="9">
    <location>
        <begin position="240"/>
        <end position="246"/>
    </location>
</feature>
<feature type="strand" evidence="9">
    <location>
        <begin position="249"/>
        <end position="255"/>
    </location>
</feature>
<feature type="helix" evidence="9">
    <location>
        <begin position="256"/>
        <end position="260"/>
    </location>
</feature>
<feature type="helix" evidence="9">
    <location>
        <begin position="266"/>
        <end position="270"/>
    </location>
</feature>
<feature type="helix" evidence="9">
    <location>
        <begin position="273"/>
        <end position="275"/>
    </location>
</feature>
<feature type="helix" evidence="9">
    <location>
        <begin position="279"/>
        <end position="282"/>
    </location>
</feature>
<feature type="strand" evidence="9">
    <location>
        <begin position="286"/>
        <end position="288"/>
    </location>
</feature>
<feature type="helix" evidence="9">
    <location>
        <begin position="291"/>
        <end position="296"/>
    </location>
</feature>
<feature type="helix" evidence="9">
    <location>
        <begin position="301"/>
        <end position="316"/>
    </location>
</feature>
<proteinExistence type="evidence at protein level"/>